<sequence>MSKVYDWFEERLEIQAIADDITSKYVPPHVNIFYCLGGITLTCFLVQVATGFAMTFYYRPTVTEAFASVQYIMTEANFGWLIRSVHRWSASMMVLMMILHVFRVYLTGGFKKPRELTWVTGVVLAVLTASFGVTGYSLPWDQVGYWAVKIVTGVPDAIPVIGSPLVELLRGSASVGQSTLTRFYSLHTFVLPLLTAVFMLMHFPMIRKQGISGPL</sequence>
<organism>
    <name type="scientific">Nicotiana tomentosiformis</name>
    <name type="common">Tobacco</name>
    <dbReference type="NCBI Taxonomy" id="4098"/>
    <lineage>
        <taxon>Eukaryota</taxon>
        <taxon>Viridiplantae</taxon>
        <taxon>Streptophyta</taxon>
        <taxon>Embryophyta</taxon>
        <taxon>Tracheophyta</taxon>
        <taxon>Spermatophyta</taxon>
        <taxon>Magnoliopsida</taxon>
        <taxon>eudicotyledons</taxon>
        <taxon>Gunneridae</taxon>
        <taxon>Pentapetalae</taxon>
        <taxon>asterids</taxon>
        <taxon>lamiids</taxon>
        <taxon>Solanales</taxon>
        <taxon>Solanaceae</taxon>
        <taxon>Nicotianoideae</taxon>
        <taxon>Nicotianeae</taxon>
        <taxon>Nicotiana</taxon>
    </lineage>
</organism>
<comment type="function">
    <text evidence="1">Component of the cytochrome b6-f complex, which mediates electron transfer between photosystem II (PSII) and photosystem I (PSI), cyclic electron flow around PSI, and state transitions.</text>
</comment>
<comment type="cofactor">
    <cofactor evidence="1">
        <name>heme b</name>
        <dbReference type="ChEBI" id="CHEBI:60344"/>
    </cofactor>
    <text evidence="1">Binds 2 heme b groups non-covalently with two histidine residues as axial ligands.</text>
</comment>
<comment type="cofactor">
    <cofactor evidence="1">
        <name>heme c</name>
        <dbReference type="ChEBI" id="CHEBI:61717"/>
    </cofactor>
    <text evidence="1">Binds one heme group covalently by a single cysteine link with no axial amino acid ligand. This heme was named heme ci.</text>
</comment>
<comment type="subunit">
    <text evidence="1">The 4 large subunits of the cytochrome b6-f complex are cytochrome b6, subunit IV (17 kDa polypeptide, PetD), cytochrome f and the Rieske protein, while the 4 small subunits are PetG, PetL, PetM and PetN. The complex functions as a dimer.</text>
</comment>
<comment type="subcellular location">
    <subcellularLocation>
        <location evidence="1">Plastid</location>
        <location evidence="1">Chloroplast thylakoid membrane</location>
        <topology evidence="1">Multi-pass membrane protein</topology>
    </subcellularLocation>
</comment>
<comment type="miscellaneous">
    <text evidence="1">Heme 1 (or BH or b566) is high-potential and absorbs at about 566 nm, and heme 2 (or BL or b562) is low-potential and absorbs at about 562 nm.</text>
</comment>
<comment type="similarity">
    <text evidence="1">Belongs to the cytochrome b family. PetB subfamily.</text>
</comment>
<dbReference type="EMBL" id="AB240139">
    <property type="protein sequence ID" value="BAE48033.1"/>
    <property type="molecule type" value="Genomic_DNA"/>
</dbReference>
<dbReference type="RefSeq" id="YP_398894.1">
    <property type="nucleotide sequence ID" value="NC_007602.1"/>
</dbReference>
<dbReference type="SMR" id="Q33C02"/>
<dbReference type="GeneID" id="3776357"/>
<dbReference type="KEGG" id="nto:3776357"/>
<dbReference type="OrthoDB" id="1246142at2759"/>
<dbReference type="GO" id="GO:0009535">
    <property type="term" value="C:chloroplast thylakoid membrane"/>
    <property type="evidence" value="ECO:0007669"/>
    <property type="project" value="UniProtKB-SubCell"/>
</dbReference>
<dbReference type="GO" id="GO:0045158">
    <property type="term" value="F:electron transporter, transferring electrons within cytochrome b6/f complex of photosystem II activity"/>
    <property type="evidence" value="ECO:0007669"/>
    <property type="project" value="UniProtKB-UniRule"/>
</dbReference>
<dbReference type="GO" id="GO:0046872">
    <property type="term" value="F:metal ion binding"/>
    <property type="evidence" value="ECO:0007669"/>
    <property type="project" value="UniProtKB-KW"/>
</dbReference>
<dbReference type="GO" id="GO:0016491">
    <property type="term" value="F:oxidoreductase activity"/>
    <property type="evidence" value="ECO:0007669"/>
    <property type="project" value="InterPro"/>
</dbReference>
<dbReference type="GO" id="GO:0015979">
    <property type="term" value="P:photosynthesis"/>
    <property type="evidence" value="ECO:0007669"/>
    <property type="project" value="UniProtKB-UniRule"/>
</dbReference>
<dbReference type="GO" id="GO:0022904">
    <property type="term" value="P:respiratory electron transport chain"/>
    <property type="evidence" value="ECO:0007669"/>
    <property type="project" value="InterPro"/>
</dbReference>
<dbReference type="CDD" id="cd00284">
    <property type="entry name" value="Cytochrome_b_N"/>
    <property type="match status" value="1"/>
</dbReference>
<dbReference type="FunFam" id="1.20.810.10:FF:000001">
    <property type="entry name" value="Cytochrome b6"/>
    <property type="match status" value="1"/>
</dbReference>
<dbReference type="Gene3D" id="1.20.810.10">
    <property type="entry name" value="Cytochrome Bc1 Complex, Chain C"/>
    <property type="match status" value="1"/>
</dbReference>
<dbReference type="HAMAP" id="MF_00633">
    <property type="entry name" value="Cytb6_f_cytb6"/>
    <property type="match status" value="1"/>
</dbReference>
<dbReference type="InterPro" id="IPR005797">
    <property type="entry name" value="Cyt_b/b6_N"/>
</dbReference>
<dbReference type="InterPro" id="IPR023530">
    <property type="entry name" value="Cyt_B6_PetB"/>
</dbReference>
<dbReference type="InterPro" id="IPR027387">
    <property type="entry name" value="Cytb/b6-like_sf"/>
</dbReference>
<dbReference type="InterPro" id="IPR048259">
    <property type="entry name" value="Cytochrome_b_N_euk/bac"/>
</dbReference>
<dbReference type="InterPro" id="IPR016174">
    <property type="entry name" value="Di-haem_cyt_TM"/>
</dbReference>
<dbReference type="NCBIfam" id="NF002990">
    <property type="entry name" value="PRK03735.1"/>
    <property type="match status" value="1"/>
</dbReference>
<dbReference type="PANTHER" id="PTHR19271">
    <property type="entry name" value="CYTOCHROME B"/>
    <property type="match status" value="1"/>
</dbReference>
<dbReference type="PANTHER" id="PTHR19271:SF16">
    <property type="entry name" value="CYTOCHROME B"/>
    <property type="match status" value="1"/>
</dbReference>
<dbReference type="Pfam" id="PF00033">
    <property type="entry name" value="Cytochrome_B"/>
    <property type="match status" value="1"/>
</dbReference>
<dbReference type="PIRSF" id="PIRSF000032">
    <property type="entry name" value="Cytochrome_b6"/>
    <property type="match status" value="1"/>
</dbReference>
<dbReference type="SUPFAM" id="SSF81342">
    <property type="entry name" value="Transmembrane di-heme cytochromes"/>
    <property type="match status" value="1"/>
</dbReference>
<dbReference type="PROSITE" id="PS51002">
    <property type="entry name" value="CYTB_NTER"/>
    <property type="match status" value="1"/>
</dbReference>
<proteinExistence type="inferred from homology"/>
<feature type="chain" id="PRO_0000275325" description="Cytochrome b6">
    <location>
        <begin position="1"/>
        <end position="215"/>
    </location>
</feature>
<feature type="transmembrane region" description="Helical" evidence="1">
    <location>
        <begin position="32"/>
        <end position="52"/>
    </location>
</feature>
<feature type="transmembrane region" description="Helical" evidence="1">
    <location>
        <begin position="90"/>
        <end position="110"/>
    </location>
</feature>
<feature type="transmembrane region" description="Helical" evidence="1">
    <location>
        <begin position="116"/>
        <end position="136"/>
    </location>
</feature>
<feature type="transmembrane region" description="Helical" evidence="1">
    <location>
        <begin position="186"/>
        <end position="206"/>
    </location>
</feature>
<feature type="binding site" description="covalent" evidence="1">
    <location>
        <position position="35"/>
    </location>
    <ligand>
        <name>heme c</name>
        <dbReference type="ChEBI" id="CHEBI:61717"/>
    </ligand>
</feature>
<feature type="binding site" description="axial binding residue" evidence="1">
    <location>
        <position position="86"/>
    </location>
    <ligand>
        <name>heme b</name>
        <dbReference type="ChEBI" id="CHEBI:60344"/>
        <label>2</label>
    </ligand>
    <ligandPart>
        <name>Fe</name>
        <dbReference type="ChEBI" id="CHEBI:18248"/>
    </ligandPart>
</feature>
<feature type="binding site" description="axial binding residue" evidence="1">
    <location>
        <position position="100"/>
    </location>
    <ligand>
        <name>heme b</name>
        <dbReference type="ChEBI" id="CHEBI:60344"/>
        <label>1</label>
    </ligand>
    <ligandPart>
        <name>Fe</name>
        <dbReference type="ChEBI" id="CHEBI:18248"/>
    </ligandPart>
</feature>
<feature type="binding site" description="axial binding residue" evidence="1">
    <location>
        <position position="187"/>
    </location>
    <ligand>
        <name>heme b</name>
        <dbReference type="ChEBI" id="CHEBI:60344"/>
        <label>2</label>
    </ligand>
    <ligandPart>
        <name>Fe</name>
        <dbReference type="ChEBI" id="CHEBI:18248"/>
    </ligandPart>
</feature>
<feature type="binding site" description="axial binding residue" evidence="1">
    <location>
        <position position="202"/>
    </location>
    <ligand>
        <name>heme b</name>
        <dbReference type="ChEBI" id="CHEBI:60344"/>
        <label>1</label>
    </ligand>
    <ligandPart>
        <name>Fe</name>
        <dbReference type="ChEBI" id="CHEBI:18248"/>
    </ligandPart>
</feature>
<evidence type="ECO:0000255" key="1">
    <source>
        <dbReference type="HAMAP-Rule" id="MF_00633"/>
    </source>
</evidence>
<keyword id="KW-0150">Chloroplast</keyword>
<keyword id="KW-0249">Electron transport</keyword>
<keyword id="KW-0349">Heme</keyword>
<keyword id="KW-0408">Iron</keyword>
<keyword id="KW-0472">Membrane</keyword>
<keyword id="KW-0479">Metal-binding</keyword>
<keyword id="KW-0602">Photosynthesis</keyword>
<keyword id="KW-0934">Plastid</keyword>
<keyword id="KW-0793">Thylakoid</keyword>
<keyword id="KW-0812">Transmembrane</keyword>
<keyword id="KW-1133">Transmembrane helix</keyword>
<keyword id="KW-0813">Transport</keyword>
<protein>
    <recommendedName>
        <fullName evidence="1">Cytochrome b6</fullName>
    </recommendedName>
</protein>
<geneLocation type="chloroplast"/>
<gene>
    <name evidence="1" type="primary">petB</name>
</gene>
<name>CYB6_NICTO</name>
<reference key="1">
    <citation type="journal article" date="2006" name="Mol. Genet. Genomics">
        <title>The chloroplast genome of Nicotiana sylvestris and Nicotiana tomentosiformis: complete sequencing confirms that the Nicotiana sylvestris progenitor is the maternal genome donor of Nicotiana tabacum.</title>
        <authorList>
            <person name="Yukawa M."/>
            <person name="Tsudzuki T."/>
            <person name="Sugiura M."/>
        </authorList>
    </citation>
    <scope>NUCLEOTIDE SEQUENCE [LARGE SCALE GENOMIC DNA]</scope>
</reference>
<accession>Q33C02</accession>